<evidence type="ECO:0000250" key="1"/>
<evidence type="ECO:0000255" key="2">
    <source>
        <dbReference type="PROSITE-ProRule" id="PRU01081"/>
    </source>
</evidence>
<evidence type="ECO:0000256" key="3">
    <source>
        <dbReference type="SAM" id="MobiDB-lite"/>
    </source>
</evidence>
<evidence type="ECO:0000269" key="4">
    <source>
    </source>
</evidence>
<evidence type="ECO:0000269" key="5">
    <source>
    </source>
</evidence>
<evidence type="ECO:0000269" key="6">
    <source>
    </source>
</evidence>
<evidence type="ECO:0000269" key="7">
    <source ref="10"/>
</evidence>
<evidence type="ECO:0000305" key="8"/>
<accession>O24409</accession>
<accession>Q8L8X3</accession>
<accession>Q9LDL6</accession>
<protein>
    <recommendedName>
        <fullName>Auxin-responsive protein IAA19</fullName>
    </recommendedName>
    <alternativeName>
        <fullName>Indoleacetic acid-induced protein 19</fullName>
    </alternativeName>
    <alternativeName>
        <fullName>Protein MASSUGU 2</fullName>
    </alternativeName>
</protein>
<reference key="1">
    <citation type="journal article" date="2000" name="DNA Res.">
        <title>Structural analysis of Arabidopsis thaliana chromosome 3. I. Sequence features of the regions of 4,504,864 bp covered by sixty P1 and TAC clones.</title>
        <authorList>
            <person name="Sato S."/>
            <person name="Nakamura Y."/>
            <person name="Kaneko T."/>
            <person name="Katoh T."/>
            <person name="Asamizu E."/>
            <person name="Tabata S."/>
        </authorList>
    </citation>
    <scope>NUCLEOTIDE SEQUENCE [LARGE SCALE GENOMIC DNA]</scope>
    <source>
        <strain>cv. Columbia</strain>
    </source>
</reference>
<reference key="2">
    <citation type="journal article" date="2000" name="Nature">
        <title>Sequence and analysis of chromosome 3 of the plant Arabidopsis thaliana.</title>
        <authorList>
            <person name="Salanoubat M."/>
            <person name="Lemcke K."/>
            <person name="Rieger M."/>
            <person name="Ansorge W."/>
            <person name="Unseld M."/>
            <person name="Fartmann B."/>
            <person name="Valle G."/>
            <person name="Bloecker H."/>
            <person name="Perez-Alonso M."/>
            <person name="Obermaier B."/>
            <person name="Delseny M."/>
            <person name="Boutry M."/>
            <person name="Grivell L.A."/>
            <person name="Mache R."/>
            <person name="Puigdomenech P."/>
            <person name="De Simone V."/>
            <person name="Choisne N."/>
            <person name="Artiguenave F."/>
            <person name="Robert C."/>
            <person name="Brottier P."/>
            <person name="Wincker P."/>
            <person name="Cattolico L."/>
            <person name="Weissenbach J."/>
            <person name="Saurin W."/>
            <person name="Quetier F."/>
            <person name="Schaefer M."/>
            <person name="Mueller-Auer S."/>
            <person name="Gabel C."/>
            <person name="Fuchs M."/>
            <person name="Benes V."/>
            <person name="Wurmbach E."/>
            <person name="Drzonek H."/>
            <person name="Erfle H."/>
            <person name="Jordan N."/>
            <person name="Bangert S."/>
            <person name="Wiedelmann R."/>
            <person name="Kranz H."/>
            <person name="Voss H."/>
            <person name="Holland R."/>
            <person name="Brandt P."/>
            <person name="Nyakatura G."/>
            <person name="Vezzi A."/>
            <person name="D'Angelo M."/>
            <person name="Pallavicini A."/>
            <person name="Toppo S."/>
            <person name="Simionati B."/>
            <person name="Conrad A."/>
            <person name="Hornischer K."/>
            <person name="Kauer G."/>
            <person name="Loehnert T.-H."/>
            <person name="Nordsiek G."/>
            <person name="Reichelt J."/>
            <person name="Scharfe M."/>
            <person name="Schoen O."/>
            <person name="Bargues M."/>
            <person name="Terol J."/>
            <person name="Climent J."/>
            <person name="Navarro P."/>
            <person name="Collado C."/>
            <person name="Perez-Perez A."/>
            <person name="Ottenwaelder B."/>
            <person name="Duchemin D."/>
            <person name="Cooke R."/>
            <person name="Laudie M."/>
            <person name="Berger-Llauro C."/>
            <person name="Purnelle B."/>
            <person name="Masuy D."/>
            <person name="de Haan M."/>
            <person name="Maarse A.C."/>
            <person name="Alcaraz J.-P."/>
            <person name="Cottet A."/>
            <person name="Casacuberta E."/>
            <person name="Monfort A."/>
            <person name="Argiriou A."/>
            <person name="Flores M."/>
            <person name="Liguori R."/>
            <person name="Vitale D."/>
            <person name="Mannhaupt G."/>
            <person name="Haase D."/>
            <person name="Schoof H."/>
            <person name="Rudd S."/>
            <person name="Zaccaria P."/>
            <person name="Mewes H.-W."/>
            <person name="Mayer K.F.X."/>
            <person name="Kaul S."/>
            <person name="Town C.D."/>
            <person name="Koo H.L."/>
            <person name="Tallon L.J."/>
            <person name="Jenkins J."/>
            <person name="Rooney T."/>
            <person name="Rizzo M."/>
            <person name="Walts A."/>
            <person name="Utterback T."/>
            <person name="Fujii C.Y."/>
            <person name="Shea T.P."/>
            <person name="Creasy T.H."/>
            <person name="Haas B."/>
            <person name="Maiti R."/>
            <person name="Wu D."/>
            <person name="Peterson J."/>
            <person name="Van Aken S."/>
            <person name="Pai G."/>
            <person name="Militscher J."/>
            <person name="Sellers P."/>
            <person name="Gill J.E."/>
            <person name="Feldblyum T.V."/>
            <person name="Preuss D."/>
            <person name="Lin X."/>
            <person name="Nierman W.C."/>
            <person name="Salzberg S.L."/>
            <person name="White O."/>
            <person name="Venter J.C."/>
            <person name="Fraser C.M."/>
            <person name="Kaneko T."/>
            <person name="Nakamura Y."/>
            <person name="Sato S."/>
            <person name="Kato T."/>
            <person name="Asamizu E."/>
            <person name="Sasamoto S."/>
            <person name="Kimura T."/>
            <person name="Idesawa K."/>
            <person name="Kawashima K."/>
            <person name="Kishida Y."/>
            <person name="Kiyokawa C."/>
            <person name="Kohara M."/>
            <person name="Matsumoto M."/>
            <person name="Matsuno A."/>
            <person name="Muraki A."/>
            <person name="Nakayama S."/>
            <person name="Nakazaki N."/>
            <person name="Shinpo S."/>
            <person name="Takeuchi C."/>
            <person name="Wada T."/>
            <person name="Watanabe A."/>
            <person name="Yamada M."/>
            <person name="Yasuda M."/>
            <person name="Tabata S."/>
        </authorList>
    </citation>
    <scope>NUCLEOTIDE SEQUENCE [LARGE SCALE GENOMIC DNA]</scope>
    <source>
        <strain>cv. Columbia</strain>
    </source>
</reference>
<reference key="3">
    <citation type="journal article" date="2017" name="Plant J.">
        <title>Araport11: a complete reannotation of the Arabidopsis thaliana reference genome.</title>
        <authorList>
            <person name="Cheng C.Y."/>
            <person name="Krishnakumar V."/>
            <person name="Chan A.P."/>
            <person name="Thibaud-Nissen F."/>
            <person name="Schobel S."/>
            <person name="Town C.D."/>
        </authorList>
    </citation>
    <scope>GENOME REANNOTATION</scope>
    <source>
        <strain>cv. Columbia</strain>
    </source>
</reference>
<reference key="4">
    <citation type="submission" date="2002-03" db="EMBL/GenBank/DDBJ databases">
        <title>Full-length cDNA from Arabidopsis thaliana.</title>
        <authorList>
            <person name="Brover V.V."/>
            <person name="Troukhan M.E."/>
            <person name="Alexandrov N.A."/>
            <person name="Lu Y.-P."/>
            <person name="Flavell R.B."/>
            <person name="Feldmann K.A."/>
        </authorList>
    </citation>
    <scope>NUCLEOTIDE SEQUENCE [LARGE SCALE MRNA]</scope>
</reference>
<reference key="5">
    <citation type="journal article" date="1997" name="Proc. Natl. Acad. Sci. U.S.A.">
        <title>Protein-protein interactions among the Aux/IAA proteins.</title>
        <authorList>
            <person name="Kim J."/>
            <person name="Harter K."/>
            <person name="Theologis A."/>
        </authorList>
    </citation>
    <scope>NUCLEOTIDE SEQUENCE [MRNA] OF 53-197</scope>
</reference>
<reference key="6">
    <citation type="journal article" date="2004" name="Plant Cell">
        <title>MASSUGU2 encodes Aux/IAA19, an auxin-regulated protein that functions together with the transcriptional activator NPH4/ARF7 to regulate differential growth responses of hypocotyl and formation of lateral roots in Arabidopsis thaliana.</title>
        <authorList>
            <person name="Tatematsu K."/>
            <person name="Kumagai S."/>
            <person name="Muto H."/>
            <person name="Sato A."/>
            <person name="Watahiki M.K."/>
            <person name="Harper R.M."/>
            <person name="Liscum E."/>
            <person name="Yamamoto K.T."/>
        </authorList>
    </citation>
    <scope>MUTANTS MSG2-1; MSG2-2; MSG2-3 AND MSG2-4</scope>
    <scope>INDUCTION BY AUXIN</scope>
</reference>
<reference key="7">
    <citation type="journal article" date="2002" name="Plant Mol. Biol.">
        <title>Genetics of Aux/IAA and ARF action in plant growth and development.</title>
        <authorList>
            <person name="Liscum E."/>
            <person name="Reed J.W."/>
        </authorList>
    </citation>
    <scope>GENE FAMILY</scope>
    <scope>NOMENCLATURE</scope>
    <scope>FUNCTION</scope>
</reference>
<reference key="8">
    <citation type="journal article" date="2004" name="Plant Cell">
        <title>Aux/IAA proteins contain a potent transcriptional repression domain.</title>
        <authorList>
            <person name="Tiwari S.B."/>
            <person name="Hagen G."/>
            <person name="Guilfoyle T.J."/>
        </authorList>
    </citation>
    <scope>TRANSCRIPTIONAL REPRESSION DOMAIN</scope>
</reference>
<reference key="9">
    <citation type="journal article" date="2006" name="Cell">
        <title>Different plant hormones regulate similar processes through largely nonoverlapping transcriptional responses.</title>
        <authorList>
            <person name="Nemhauser J.L."/>
            <person name="Hong F."/>
            <person name="Chory J."/>
        </authorList>
    </citation>
    <scope>INDUCTION BY AUXIN</scope>
</reference>
<reference key="10">
    <citation type="journal article" date="2007" name="Physiol. Plantarum">
        <title>Differential expression of the auxin primary response gene MASSUGU2/IAA19during tropic responses of Arabidopsis hypocotyls.</title>
        <authorList>
            <person name="Saito K."/>
            <person name="Watahiki M.K."/>
            <person name="Yamamoto K.T."/>
        </authorList>
    </citation>
    <scope>INDUCTION BY PHOTOTROPISM</scope>
</reference>
<organism>
    <name type="scientific">Arabidopsis thaliana</name>
    <name type="common">Mouse-ear cress</name>
    <dbReference type="NCBI Taxonomy" id="3702"/>
    <lineage>
        <taxon>Eukaryota</taxon>
        <taxon>Viridiplantae</taxon>
        <taxon>Streptophyta</taxon>
        <taxon>Embryophyta</taxon>
        <taxon>Tracheophyta</taxon>
        <taxon>Spermatophyta</taxon>
        <taxon>Magnoliopsida</taxon>
        <taxon>eudicotyledons</taxon>
        <taxon>Gunneridae</taxon>
        <taxon>Pentapetalae</taxon>
        <taxon>rosids</taxon>
        <taxon>malvids</taxon>
        <taxon>Brassicales</taxon>
        <taxon>Brassicaceae</taxon>
        <taxon>Camelineae</taxon>
        <taxon>Arabidopsis</taxon>
    </lineage>
</organism>
<gene>
    <name type="primary">IAA19</name>
    <name type="synonym">MSG2</name>
    <name type="ordered locus">At3g15540</name>
    <name type="ORF">MJK13.20</name>
</gene>
<keyword id="KW-0927">Auxin signaling pathway</keyword>
<keyword id="KW-0539">Nucleus</keyword>
<keyword id="KW-1185">Reference proteome</keyword>
<keyword id="KW-0678">Repressor</keyword>
<keyword id="KW-0804">Transcription</keyword>
<keyword id="KW-0805">Transcription regulation</keyword>
<feature type="chain" id="PRO_0000112850" description="Auxin-responsive protein IAA19">
    <location>
        <begin position="1"/>
        <end position="197"/>
    </location>
</feature>
<feature type="domain" description="PB1" evidence="2">
    <location>
        <begin position="96"/>
        <end position="184"/>
    </location>
</feature>
<feature type="region of interest" description="Disordered" evidence="3">
    <location>
        <begin position="35"/>
        <end position="67"/>
    </location>
</feature>
<feature type="short sequence motif" description="EAR-like (transcriptional repression)">
    <location>
        <begin position="13"/>
        <end position="17"/>
    </location>
</feature>
<feature type="compositionally biased region" description="Polar residues" evidence="3">
    <location>
        <begin position="35"/>
        <end position="47"/>
    </location>
</feature>
<feature type="mutagenesis site" description="In msg2-2; gain of function. Affects auxin-related developmental processes.">
    <original>G</original>
    <variation>R</variation>
    <location>
        <position position="73"/>
    </location>
</feature>
<feature type="mutagenesis site" description="In msg2-4; gain of function. Affects auxin-related developmental processes.">
    <original>P</original>
    <variation>L</variation>
    <location>
        <position position="75"/>
    </location>
</feature>
<feature type="mutagenesis site" description="In msg2-3; gain of function. Affects auxin-related developmental processes.">
    <original>P</original>
    <variation>L</variation>
    <location>
        <position position="76"/>
    </location>
</feature>
<feature type="mutagenesis site" description="In msg2-1; gain of function. Affects auxin-related developmental processes.">
    <original>P</original>
    <variation>S</variation>
    <location>
        <position position="76"/>
    </location>
</feature>
<feature type="sequence conflict" description="In Ref. 4; AAM67069." evidence="8" ref="4">
    <original>A</original>
    <variation>S</variation>
    <location>
        <position position="126"/>
    </location>
</feature>
<proteinExistence type="evidence at protein level"/>
<comment type="function">
    <text evidence="4">Aux/IAA proteins are short-lived transcriptional factors that function as repressors of early auxin response genes at low auxin concentrations. Repression is thought to result from the interaction with auxin response factors (ARFs), proteins that bind to the auxin-responsive promoter element (AuxRE). Formation of heterodimers with ARF proteins may alter their ability to modulate early auxin response genes expression.</text>
</comment>
<comment type="subunit">
    <text>Homodimers and heterodimers. Interacts with the auxin response factor ARF7.</text>
</comment>
<comment type="interaction">
    <interactant intactId="EBI-632257">
        <id>O24409</id>
    </interactant>
    <interactant intactId="EBI-3946783">
        <id>Q9C5W9</id>
        <label>ARF18</label>
    </interactant>
    <organismsDiffer>false</organismsDiffer>
    <experiments>6</experiments>
</comment>
<comment type="interaction">
    <interactant intactId="EBI-632257">
        <id>O24409</id>
    </interactant>
    <interactant intactId="EBI-529887">
        <id>Q8RYC8</id>
        <label>ARF19</label>
    </interactant>
    <organismsDiffer>false</organismsDiffer>
    <experiments>4</experiments>
</comment>
<comment type="interaction">
    <interactant intactId="EBI-632257">
        <id>O24409</id>
    </interactant>
    <interactant intactId="EBI-3946495">
        <id>Q9ZTX9</id>
        <label>ARF4</label>
    </interactant>
    <organismsDiffer>false</organismsDiffer>
    <experiments>2</experiments>
</comment>
<comment type="interaction">
    <interactant intactId="EBI-632257">
        <id>O24409</id>
    </interactant>
    <interactant intactId="EBI-629519">
        <id>P93024</id>
        <label>ARF5</label>
    </interactant>
    <organismsDiffer>false</organismsDiffer>
    <experiments>4</experiments>
</comment>
<comment type="interaction">
    <interactant intactId="EBI-632257">
        <id>O24409</id>
    </interactant>
    <interactant intactId="EBI-632284">
        <id>P93022</id>
        <label>ARF7</label>
    </interactant>
    <organismsDiffer>false</organismsDiffer>
    <experiments>5</experiments>
</comment>
<comment type="interaction">
    <interactant intactId="EBI-632257">
        <id>O24409</id>
    </interactant>
    <interactant intactId="EBI-1554169">
        <id>Q9FGV1</id>
        <label>ARF8</label>
    </interactant>
    <organismsDiffer>false</organismsDiffer>
    <experiments>4</experiments>
</comment>
<comment type="interaction">
    <interactant intactId="EBI-632257">
        <id>O24409</id>
    </interactant>
    <interactant intactId="EBI-3946762">
        <id>Q9XED8</id>
        <label>ARF9</label>
    </interactant>
    <organismsDiffer>false</organismsDiffer>
    <experiments>2</experiments>
</comment>
<comment type="interaction">
    <interactant intactId="EBI-632257">
        <id>O24409</id>
    </interactant>
    <interactant intactId="EBI-25523851">
        <id>Q9FIK2</id>
        <label>At5g47790</label>
    </interactant>
    <organismsDiffer>false</organismsDiffer>
    <experiments>3</experiments>
</comment>
<comment type="interaction">
    <interactant intactId="EBI-632257">
        <id>O24409</id>
    </interactant>
    <interactant intactId="EBI-630505">
        <id>P49677</id>
        <label>IAA1</label>
    </interactant>
    <organismsDiffer>false</organismsDiffer>
    <experiments>12</experiments>
</comment>
<comment type="interaction">
    <interactant intactId="EBI-632257">
        <id>O24409</id>
    </interactant>
    <interactant intactId="EBI-3946434">
        <id>Q38828</id>
        <label>IAA10</label>
    </interactant>
    <organismsDiffer>false</organismsDiffer>
    <experiments>9</experiments>
</comment>
<comment type="interaction">
    <interactant intactId="EBI-632257">
        <id>O24409</id>
    </interactant>
    <interactant intactId="EBI-2367923">
        <id>Q38829</id>
        <label>IAA11</label>
    </interactant>
    <organismsDiffer>false</organismsDiffer>
    <experiments>7</experiments>
</comment>
<comment type="interaction">
    <interactant intactId="EBI-632257">
        <id>O24409</id>
    </interactant>
    <interactant intactId="EBI-617608">
        <id>Q38830</id>
        <label>IAA12</label>
    </interactant>
    <organismsDiffer>false</organismsDiffer>
    <experiments>8</experiments>
</comment>
<comment type="interaction">
    <interactant intactId="EBI-632257">
        <id>O24409</id>
    </interactant>
    <interactant intactId="EBI-1554143">
        <id>Q38831</id>
        <label>IAA13</label>
    </interactant>
    <organismsDiffer>false</organismsDiffer>
    <experiments>11</experiments>
</comment>
<comment type="interaction">
    <interactant intactId="EBI-632257">
        <id>O24409</id>
    </interactant>
    <interactant intactId="EBI-2295562">
        <id>Q38832</id>
        <label>IAA14</label>
    </interactant>
    <organismsDiffer>false</organismsDiffer>
    <experiments>4</experiments>
</comment>
<comment type="interaction">
    <interactant intactId="EBI-632257">
        <id>O24409</id>
    </interactant>
    <interactant intactId="EBI-25524519">
        <id>A0A2H1ZEF6</id>
        <label>IAA15</label>
    </interactant>
    <organismsDiffer>false</organismsDiffer>
    <experiments>5</experiments>
</comment>
<comment type="interaction">
    <interactant intactId="EBI-632257">
        <id>O24409</id>
    </interactant>
    <interactant intactId="EBI-632231">
        <id>O24407</id>
        <label>IAA16</label>
    </interactant>
    <organismsDiffer>false</organismsDiffer>
    <experiments>11</experiments>
</comment>
<comment type="interaction">
    <interactant intactId="EBI-632257">
        <id>O24409</id>
    </interactant>
    <interactant intactId="EBI-632243">
        <id>P93830</id>
        <label>IAA17</label>
    </interactant>
    <organismsDiffer>false</organismsDiffer>
    <experiments>11</experiments>
</comment>
<comment type="interaction">
    <interactant intactId="EBI-632257">
        <id>O24409</id>
    </interactant>
    <interactant intactId="EBI-2295525">
        <id>O24408</id>
        <label>IAA18</label>
    </interactant>
    <organismsDiffer>false</organismsDiffer>
    <experiments>3</experiments>
</comment>
<comment type="interaction">
    <interactant intactId="EBI-632257">
        <id>O24409</id>
    </interactant>
    <interactant intactId="EBI-632257">
        <id>O24409</id>
        <label>IAA19</label>
    </interactant>
    <organismsDiffer>false</organismsDiffer>
    <experiments>4</experiments>
</comment>
<comment type="interaction">
    <interactant intactId="EBI-632257">
        <id>O24409</id>
    </interactant>
    <interactant intactId="EBI-632343">
        <id>P49678</id>
        <label>IAA2</label>
    </interactant>
    <organismsDiffer>false</organismsDiffer>
    <experiments>10</experiments>
</comment>
<comment type="interaction">
    <interactant intactId="EBI-632257">
        <id>O24409</id>
    </interactant>
    <interactant intactId="EBI-632272">
        <id>O24410</id>
        <label>IAA20</label>
    </interactant>
    <organismsDiffer>false</organismsDiffer>
    <experiments>5</experiments>
</comment>
<comment type="interaction">
    <interactant intactId="EBI-632257">
        <id>O24409</id>
    </interactant>
    <interactant intactId="EBI-3947418">
        <id>Q8LAL2</id>
        <label>IAA26</label>
    </interactant>
    <organismsDiffer>false</organismsDiffer>
    <experiments>9</experiments>
</comment>
<comment type="interaction">
    <interactant intactId="EBI-632257">
        <id>O24409</id>
    </interactant>
    <interactant intactId="EBI-3946677">
        <id>Q9ZSY8</id>
        <label>IAA27</label>
    </interactant>
    <organismsDiffer>false</organismsDiffer>
    <experiments>10</experiments>
</comment>
<comment type="interaction">
    <interactant intactId="EBI-632257">
        <id>O24409</id>
    </interactant>
    <interactant intactId="EBI-3133404">
        <id>Q9XFM0</id>
        <label>IAA28</label>
    </interactant>
    <organismsDiffer>false</organismsDiffer>
    <experiments>9</experiments>
</comment>
<comment type="interaction">
    <interactant intactId="EBI-632257">
        <id>O24409</id>
    </interactant>
    <interactant intactId="EBI-307174">
        <id>Q38822</id>
        <label>IAA3</label>
    </interactant>
    <organismsDiffer>false</organismsDiffer>
    <experiments>11</experiments>
</comment>
<comment type="interaction">
    <interactant intactId="EBI-632257">
        <id>O24409</id>
    </interactant>
    <interactant intactId="EBI-3946408">
        <id>Q8H174</id>
        <label>IAA31</label>
    </interactant>
    <organismsDiffer>false</organismsDiffer>
    <experiments>11</experiments>
</comment>
<comment type="interaction">
    <interactant intactId="EBI-632257">
        <id>O24409</id>
    </interactant>
    <interactant intactId="EBI-3946448">
        <id>Q8RYC6</id>
        <label>IAA32</label>
    </interactant>
    <organismsDiffer>false</organismsDiffer>
    <experiments>3</experiments>
</comment>
<comment type="interaction">
    <interactant intactId="EBI-632257">
        <id>O24409</id>
    </interactant>
    <interactant intactId="EBI-3946739">
        <id>Q9FKM7</id>
        <label>IAA33</label>
    </interactant>
    <organismsDiffer>false</organismsDiffer>
    <experiments>3</experiments>
</comment>
<comment type="interaction">
    <interactant intactId="EBI-632257">
        <id>O24409</id>
    </interactant>
    <interactant intactId="EBI-3946459">
        <id>Q9C5X0</id>
        <label>IAA34</label>
    </interactant>
    <organismsDiffer>false</organismsDiffer>
    <experiments>8</experiments>
</comment>
<comment type="interaction">
    <interactant intactId="EBI-632257">
        <id>O24409</id>
    </interactant>
    <interactant intactId="EBI-632187">
        <id>P33077</id>
        <label>IAA4</label>
    </interactant>
    <organismsDiffer>false</organismsDiffer>
    <experiments>9</experiments>
</comment>
<comment type="interaction">
    <interactant intactId="EBI-632257">
        <id>O24409</id>
    </interactant>
    <interactant intactId="EBI-3946487">
        <id>P33078</id>
        <label>IAA5</label>
    </interactant>
    <organismsDiffer>false</organismsDiffer>
    <experiments>6</experiments>
</comment>
<comment type="interaction">
    <interactant intactId="EBI-632257">
        <id>O24409</id>
    </interactant>
    <interactant intactId="EBI-1554124">
        <id>Q38824</id>
        <label>IAA6</label>
    </interactant>
    <organismsDiffer>false</organismsDiffer>
    <experiments>8</experiments>
</comment>
<comment type="interaction">
    <interactant intactId="EBI-632257">
        <id>O24409</id>
    </interactant>
    <interactant intactId="EBI-602959">
        <id>Q38825</id>
        <label>IAA7</label>
    </interactant>
    <organismsDiffer>false</organismsDiffer>
    <experiments>7</experiments>
</comment>
<comment type="interaction">
    <interactant intactId="EBI-632257">
        <id>O24409</id>
    </interactant>
    <interactant intactId="EBI-632200">
        <id>Q38826</id>
        <label>IAA8</label>
    </interactant>
    <organismsDiffer>false</organismsDiffer>
    <experiments>7</experiments>
</comment>
<comment type="interaction">
    <interactant intactId="EBI-632257">
        <id>O24409</id>
    </interactant>
    <interactant intactId="EBI-632216">
        <id>Q38827</id>
        <label>IAA9</label>
    </interactant>
    <organismsDiffer>false</organismsDiffer>
    <experiments>4</experiments>
</comment>
<comment type="interaction">
    <interactant intactId="EBI-632257">
        <id>O24409</id>
    </interactant>
    <interactant intactId="EBI-21497119">
        <id>Q9LTC4</id>
        <label>MYB15</label>
    </interactant>
    <organismsDiffer>false</organismsDiffer>
    <experiments>3</experiments>
</comment>
<comment type="interaction">
    <interactant intactId="EBI-632257">
        <id>O24409</id>
    </interactant>
    <interactant intactId="EBI-1238013">
        <id>O22179</id>
        <label>MYB70</label>
    </interactant>
    <organismsDiffer>false</organismsDiffer>
    <experiments>3</experiments>
</comment>
<comment type="interaction">
    <interactant intactId="EBI-632257">
        <id>O24409</id>
    </interactant>
    <interactant intactId="EBI-2324225">
        <id>Q9SN12</id>
        <label>MYB77</label>
    </interactant>
    <organismsDiffer>false</organismsDiffer>
    <experiments>3</experiments>
</comment>
<comment type="interaction">
    <interactant intactId="EBI-632257">
        <id>O24409</id>
    </interactant>
    <interactant intactId="EBI-1536703">
        <id>Q9FUA4</id>
        <label>SPT</label>
    </interactant>
    <organismsDiffer>false</organismsDiffer>
    <experiments>3</experiments>
</comment>
<comment type="interaction">
    <interactant intactId="EBI-632257">
        <id>O24409</id>
    </interactant>
    <interactant intactId="EBI-25522447">
        <id>Q9MAH8</id>
        <label>TCP3</label>
    </interactant>
    <organismsDiffer>false</organismsDiffer>
    <experiments>3</experiments>
</comment>
<comment type="interaction">
    <interactant intactId="EBI-632257">
        <id>O24409</id>
    </interactant>
    <interactant intactId="EBI-4426557">
        <id>Q84MB2</id>
        <label>TIFY8</label>
    </interactant>
    <organismsDiffer>false</organismsDiffer>
    <experiments>3</experiments>
</comment>
<comment type="interaction">
    <interactant intactId="EBI-632257">
        <id>O24409</id>
    </interactant>
    <interactant intactId="EBI-1806244">
        <id>O64722</id>
        <label>ZHD3</label>
    </interactant>
    <organismsDiffer>false</organismsDiffer>
    <experiments>3</experiments>
</comment>
<comment type="interaction">
    <interactant intactId="EBI-632257">
        <id>O24409</id>
    </interactant>
    <interactant intactId="EBI-1806382">
        <id>Q9SVL0</id>
        <label>ZHD7</label>
    </interactant>
    <organismsDiffer>false</organismsDiffer>
    <experiments>3</experiments>
</comment>
<comment type="subcellular location">
    <subcellularLocation>
        <location evidence="1">Nucleus</location>
    </subcellularLocation>
</comment>
<comment type="induction">
    <text evidence="5 6 7">Up-regulated by auxin (PubMed:14729917, PubMed:16901781). Up-regulated by phototropism in hypocotyls, with a higher level on the shaded side (Ref.10).</text>
</comment>
<comment type="domain">
    <text>The N-terminal half of the protein contains two conserved domains I and II. Domain I includes a slightly degenerated ERF-associated amphiphilic repression (EAR) motif which seems to be involved in the activity of transcriptional repression. Domain II is required for the correct degradation of the protein through the SCF-mediated ubiquitin-proteasome pathway. Interactions between Aux/IAA proteins and auxin response factors (ARFs) occur through their C-terminal dimerization domains III and IV.</text>
</comment>
<comment type="similarity">
    <text evidence="8">Belongs to the Aux/IAA family.</text>
</comment>
<name>IAA19_ARATH</name>
<sequence length="197" mass="21494">MEKEGLGLEITELRLGLPGRDVAEKMMKKRAFTEMNMTSSGSNSDQCESGVVSSGGDAEKVNDSPAAKSQVVGWPPVCSYRKKNSCKEASTTKVGLGYVKVSMDGVPYLRKMDLGSSQGYDDLAFALDKLFGFRGIGVALKDGDNCEYVTIYEDKDGDWMLAGDVPWGMFLESCKRLRIMKRSDATGFGLQPRGVDE</sequence>
<dbReference type="EMBL" id="AB022218">
    <property type="protein sequence ID" value="BAB02383.1"/>
    <property type="molecule type" value="Genomic_DNA"/>
</dbReference>
<dbReference type="EMBL" id="AC024081">
    <property type="protein sequence ID" value="AAF35420.1"/>
    <property type="molecule type" value="Genomic_DNA"/>
</dbReference>
<dbReference type="EMBL" id="CP002686">
    <property type="protein sequence ID" value="AEE75690.1"/>
    <property type="molecule type" value="Genomic_DNA"/>
</dbReference>
<dbReference type="EMBL" id="AY088753">
    <property type="protein sequence ID" value="AAM67069.1"/>
    <property type="molecule type" value="mRNA"/>
</dbReference>
<dbReference type="EMBL" id="U49075">
    <property type="protein sequence ID" value="AAB84356.1"/>
    <property type="molecule type" value="mRNA"/>
</dbReference>
<dbReference type="RefSeq" id="NP_188173.1">
    <property type="nucleotide sequence ID" value="NM_112422.4"/>
</dbReference>
<dbReference type="SMR" id="O24409"/>
<dbReference type="BioGRID" id="6127">
    <property type="interactions" value="60"/>
</dbReference>
<dbReference type="DIP" id="DIP-34946N"/>
<dbReference type="ELM" id="O24409"/>
<dbReference type="FunCoup" id="O24409">
    <property type="interactions" value="312"/>
</dbReference>
<dbReference type="IntAct" id="O24409">
    <property type="interactions" value="52"/>
</dbReference>
<dbReference type="STRING" id="3702.O24409"/>
<dbReference type="PaxDb" id="3702-AT3G15540.1"/>
<dbReference type="ProteomicsDB" id="228812"/>
<dbReference type="EnsemblPlants" id="AT3G15540.1">
    <property type="protein sequence ID" value="AT3G15540.1"/>
    <property type="gene ID" value="AT3G15540"/>
</dbReference>
<dbReference type="GeneID" id="820793"/>
<dbReference type="Gramene" id="AT3G15540.1">
    <property type="protein sequence ID" value="AT3G15540.1"/>
    <property type="gene ID" value="AT3G15540"/>
</dbReference>
<dbReference type="KEGG" id="ath:AT3G15540"/>
<dbReference type="Araport" id="AT3G15540"/>
<dbReference type="TAIR" id="AT3G15540">
    <property type="gene designation" value="IAA19"/>
</dbReference>
<dbReference type="eggNOG" id="ENOG502RXTN">
    <property type="taxonomic scope" value="Eukaryota"/>
</dbReference>
<dbReference type="HOGENOM" id="CLU_049393_0_1_1"/>
<dbReference type="InParanoid" id="O24409"/>
<dbReference type="OMA" id="KDAENCE"/>
<dbReference type="PhylomeDB" id="O24409"/>
<dbReference type="PRO" id="PR:O24409"/>
<dbReference type="Proteomes" id="UP000006548">
    <property type="component" value="Chromosome 3"/>
</dbReference>
<dbReference type="ExpressionAtlas" id="O24409">
    <property type="expression patterns" value="baseline and differential"/>
</dbReference>
<dbReference type="GO" id="GO:0005634">
    <property type="term" value="C:nucleus"/>
    <property type="evidence" value="ECO:0007669"/>
    <property type="project" value="UniProtKB-SubCell"/>
</dbReference>
<dbReference type="GO" id="GO:0003700">
    <property type="term" value="F:DNA-binding transcription factor activity"/>
    <property type="evidence" value="ECO:0000250"/>
    <property type="project" value="TAIR"/>
</dbReference>
<dbReference type="GO" id="GO:0042802">
    <property type="term" value="F:identical protein binding"/>
    <property type="evidence" value="ECO:0000353"/>
    <property type="project" value="IntAct"/>
</dbReference>
<dbReference type="GO" id="GO:0009734">
    <property type="term" value="P:auxin-activated signaling pathway"/>
    <property type="evidence" value="ECO:0007669"/>
    <property type="project" value="UniProtKB-KW"/>
</dbReference>
<dbReference type="GO" id="GO:0009733">
    <property type="term" value="P:response to auxin"/>
    <property type="evidence" value="ECO:0000304"/>
    <property type="project" value="TAIR"/>
</dbReference>
<dbReference type="GO" id="GO:0080086">
    <property type="term" value="P:stamen filament development"/>
    <property type="evidence" value="ECO:0000315"/>
    <property type="project" value="TAIR"/>
</dbReference>
<dbReference type="FunFam" id="3.10.20.90:FF:000078">
    <property type="entry name" value="Auxin-responsive protein"/>
    <property type="match status" value="1"/>
</dbReference>
<dbReference type="Gene3D" id="3.10.20.90">
    <property type="entry name" value="Phosphatidylinositol 3-kinase Catalytic Subunit, Chain A, domain 1"/>
    <property type="match status" value="1"/>
</dbReference>
<dbReference type="InterPro" id="IPR033389">
    <property type="entry name" value="AUX/IAA_dom"/>
</dbReference>
<dbReference type="InterPro" id="IPR003311">
    <property type="entry name" value="AUX_IAA"/>
</dbReference>
<dbReference type="InterPro" id="IPR053793">
    <property type="entry name" value="PB1-like"/>
</dbReference>
<dbReference type="PANTHER" id="PTHR31734">
    <property type="entry name" value="AUXIN-RESPONSIVE PROTEIN IAA17"/>
    <property type="match status" value="1"/>
</dbReference>
<dbReference type="PANTHER" id="PTHR31734:SF121">
    <property type="entry name" value="AUXIN-RESPONSIVE PROTEIN IAA19"/>
    <property type="match status" value="1"/>
</dbReference>
<dbReference type="Pfam" id="PF02309">
    <property type="entry name" value="AUX_IAA"/>
    <property type="match status" value="1"/>
</dbReference>
<dbReference type="SUPFAM" id="SSF54277">
    <property type="entry name" value="CAD &amp; PB1 domains"/>
    <property type="match status" value="1"/>
</dbReference>
<dbReference type="PROSITE" id="PS51745">
    <property type="entry name" value="PB1"/>
    <property type="match status" value="1"/>
</dbReference>